<reference key="1">
    <citation type="journal article" date="2003" name="Genome Res.">
        <title>Genome sequence of an M3 strain of Streptococcus pyogenes reveals a large-scale genomic rearrangement in invasive strains and new insights into phage evolution.</title>
        <authorList>
            <person name="Nakagawa I."/>
            <person name="Kurokawa K."/>
            <person name="Yamashita A."/>
            <person name="Nakata M."/>
            <person name="Tomiyasu Y."/>
            <person name="Okahashi N."/>
            <person name="Kawabata S."/>
            <person name="Yamazaki K."/>
            <person name="Shiba T."/>
            <person name="Yasunaga T."/>
            <person name="Hayashi H."/>
            <person name="Hattori M."/>
            <person name="Hamada S."/>
        </authorList>
    </citation>
    <scope>NUCLEOTIDE SEQUENCE [LARGE SCALE GENOMIC DNA]</scope>
    <source>
        <strain>SSI-1</strain>
    </source>
</reference>
<protein>
    <recommendedName>
        <fullName evidence="1">V-type ATP synthase beta chain</fullName>
    </recommendedName>
    <alternativeName>
        <fullName evidence="1">V-ATPase subunit B</fullName>
    </alternativeName>
</protein>
<organism>
    <name type="scientific">Streptococcus pyogenes serotype M3 (strain SSI-1)</name>
    <dbReference type="NCBI Taxonomy" id="193567"/>
    <lineage>
        <taxon>Bacteria</taxon>
        <taxon>Bacillati</taxon>
        <taxon>Bacillota</taxon>
        <taxon>Bacilli</taxon>
        <taxon>Lactobacillales</taxon>
        <taxon>Streptococcaceae</taxon>
        <taxon>Streptococcus</taxon>
    </lineage>
</organism>
<keyword id="KW-0066">ATP synthesis</keyword>
<keyword id="KW-0375">Hydrogen ion transport</keyword>
<keyword id="KW-0406">Ion transport</keyword>
<keyword id="KW-0813">Transport</keyword>
<proteinExistence type="inferred from homology"/>
<sequence length="471" mass="52358">MSVLKEYRTVSEVVGPLMIVDQVAGVHYNELVDITLHNGERRKGQVLEVQGDKAMVQLFEGSTGINLAKTKVRFTGHPLELAVSEDMVGRIFDGMGQPIDGGPELIPEKYLDIDGQAINPVARDYPDEFIQTGISAIDHLNTLVRGQKLPVFSGSGLPHNELAAQIARQATVLNSDDNFAVVFAAMGITFEEAEFFMNDLRETGAIDRSVLFINLANDPAIERIATPRIALTTAEYLAYEKGMHVLVIMTDMTNYCEALREVSAARREVPGRRGYPGYLYTNLSTLYERAGRLIGKKGSVTQIPILTMPEDDITHPIPDLTGYITEGQIILSQELYKNGFRPPINVLPSLSRLKDKGSGEGKTRQDHAATMNQLFAAYAQGKQAKELAVVLGESALSETDKLYVAFTNRFEEEYINQGFYTNRSIEESLDLGWELLSILPRTELKRIKDDMLDRYLPKADTTMTKVFVAND</sequence>
<accession>P0DA09</accession>
<accession>Q79YM9</accession>
<accession>Q7CFI7</accession>
<comment type="function">
    <text evidence="1">Produces ATP from ADP in the presence of a proton gradient across the membrane. The V-type beta chain is a regulatory subunit.</text>
</comment>
<comment type="similarity">
    <text evidence="1">Belongs to the ATPase alpha/beta chains family.</text>
</comment>
<feature type="chain" id="PRO_0000411286" description="V-type ATP synthase beta chain">
    <location>
        <begin position="1"/>
        <end position="471"/>
    </location>
</feature>
<gene>
    <name evidence="1" type="primary">atpB</name>
    <name type="ordered locus">SPs0123</name>
</gene>
<dbReference type="EMBL" id="BA000034">
    <property type="protein sequence ID" value="BAC63218.1"/>
    <property type="molecule type" value="Genomic_DNA"/>
</dbReference>
<dbReference type="RefSeq" id="WP_002986419.1">
    <property type="nucleotide sequence ID" value="NC_004606.1"/>
</dbReference>
<dbReference type="SMR" id="P0DA09"/>
<dbReference type="KEGG" id="sps:SPs0123"/>
<dbReference type="HOGENOM" id="CLU_022916_0_0_9"/>
<dbReference type="GO" id="GO:0005524">
    <property type="term" value="F:ATP binding"/>
    <property type="evidence" value="ECO:0007669"/>
    <property type="project" value="UniProtKB-UniRule"/>
</dbReference>
<dbReference type="GO" id="GO:0046933">
    <property type="term" value="F:proton-transporting ATP synthase activity, rotational mechanism"/>
    <property type="evidence" value="ECO:0007669"/>
    <property type="project" value="UniProtKB-UniRule"/>
</dbReference>
<dbReference type="GO" id="GO:0042777">
    <property type="term" value="P:proton motive force-driven plasma membrane ATP synthesis"/>
    <property type="evidence" value="ECO:0007669"/>
    <property type="project" value="UniProtKB-UniRule"/>
</dbReference>
<dbReference type="CDD" id="cd18112">
    <property type="entry name" value="ATP-synt_V_A-type_beta_C"/>
    <property type="match status" value="1"/>
</dbReference>
<dbReference type="CDD" id="cd18118">
    <property type="entry name" value="ATP-synt_V_A-type_beta_N"/>
    <property type="match status" value="1"/>
</dbReference>
<dbReference type="CDD" id="cd01135">
    <property type="entry name" value="V_A-ATPase_B"/>
    <property type="match status" value="1"/>
</dbReference>
<dbReference type="Gene3D" id="3.40.50.12240">
    <property type="match status" value="1"/>
</dbReference>
<dbReference type="HAMAP" id="MF_00310">
    <property type="entry name" value="ATP_synth_B_arch"/>
    <property type="match status" value="1"/>
</dbReference>
<dbReference type="InterPro" id="IPR055190">
    <property type="entry name" value="ATP-synt_VA_C"/>
</dbReference>
<dbReference type="InterPro" id="IPR020003">
    <property type="entry name" value="ATPase_a/bsu_AS"/>
</dbReference>
<dbReference type="InterPro" id="IPR004100">
    <property type="entry name" value="ATPase_F1/V1/A1_a/bsu_N"/>
</dbReference>
<dbReference type="InterPro" id="IPR000194">
    <property type="entry name" value="ATPase_F1/V1/A1_a/bsu_nucl-bd"/>
</dbReference>
<dbReference type="InterPro" id="IPR027417">
    <property type="entry name" value="P-loop_NTPase"/>
</dbReference>
<dbReference type="InterPro" id="IPR022879">
    <property type="entry name" value="V-ATPase_su_B/beta"/>
</dbReference>
<dbReference type="NCBIfam" id="NF003235">
    <property type="entry name" value="PRK04196.1"/>
    <property type="match status" value="1"/>
</dbReference>
<dbReference type="PANTHER" id="PTHR43389">
    <property type="entry name" value="V-TYPE PROTON ATPASE SUBUNIT B"/>
    <property type="match status" value="1"/>
</dbReference>
<dbReference type="PANTHER" id="PTHR43389:SF4">
    <property type="entry name" value="V-TYPE PROTON ATPASE SUBUNIT B"/>
    <property type="match status" value="1"/>
</dbReference>
<dbReference type="Pfam" id="PF00006">
    <property type="entry name" value="ATP-synt_ab"/>
    <property type="match status" value="1"/>
</dbReference>
<dbReference type="Pfam" id="PF02874">
    <property type="entry name" value="ATP-synt_ab_N"/>
    <property type="match status" value="1"/>
</dbReference>
<dbReference type="Pfam" id="PF22919">
    <property type="entry name" value="ATP-synt_VA_C"/>
    <property type="match status" value="1"/>
</dbReference>
<dbReference type="PIRSF" id="PIRSF039114">
    <property type="entry name" value="V-ATPsynth_beta/V-ATPase_B"/>
    <property type="match status" value="1"/>
</dbReference>
<dbReference type="SUPFAM" id="SSF47917">
    <property type="entry name" value="C-terminal domain of alpha and beta subunits of F1 ATP synthase"/>
    <property type="match status" value="1"/>
</dbReference>
<dbReference type="SUPFAM" id="SSF52540">
    <property type="entry name" value="P-loop containing nucleoside triphosphate hydrolases"/>
    <property type="match status" value="1"/>
</dbReference>
<dbReference type="PROSITE" id="PS00152">
    <property type="entry name" value="ATPASE_ALPHA_BETA"/>
    <property type="match status" value="1"/>
</dbReference>
<evidence type="ECO:0000255" key="1">
    <source>
        <dbReference type="HAMAP-Rule" id="MF_00310"/>
    </source>
</evidence>
<name>VATB_STRPQ</name>